<organism>
    <name type="scientific">Caenorhabditis elegans</name>
    <dbReference type="NCBI Taxonomy" id="6239"/>
    <lineage>
        <taxon>Eukaryota</taxon>
        <taxon>Metazoa</taxon>
        <taxon>Ecdysozoa</taxon>
        <taxon>Nematoda</taxon>
        <taxon>Chromadorea</taxon>
        <taxon>Rhabditida</taxon>
        <taxon>Rhabditina</taxon>
        <taxon>Rhabditomorpha</taxon>
        <taxon>Rhabditoidea</taxon>
        <taxon>Rhabditidae</taxon>
        <taxon>Peloderinae</taxon>
        <taxon>Caenorhabditis</taxon>
    </lineage>
</organism>
<name>YSI2_CAEEL</name>
<feature type="chain" id="PRO_0000065298" description="Uncharacterized protein F15G9.2">
    <location>
        <begin position="1"/>
        <end position="139"/>
    </location>
</feature>
<proteinExistence type="predicted"/>
<sequence length="139" mass="16148">MDFSNSLFNLSKIEDSDNDTYRNSDCLSERFKKISKTRSIKWSSESDLTKMCSYDVAVETMRRNSLEEVSQCMQDRLNAGTENILETGEVSDENSLKKKTFLMNMFRTAVLKVMTDPSGNDVEGMYVRSLRFGMWYLQR</sequence>
<protein>
    <recommendedName>
        <fullName>Uncharacterized protein F15G9.2</fullName>
    </recommendedName>
</protein>
<accession>Q10034</accession>
<dbReference type="EMBL" id="Z47068">
    <property type="protein sequence ID" value="CAA87332.2"/>
    <property type="molecule type" value="Genomic_DNA"/>
</dbReference>
<dbReference type="PIR" id="T20988">
    <property type="entry name" value="T20988"/>
</dbReference>
<dbReference type="RefSeq" id="NP_001335504.1">
    <property type="nucleotide sequence ID" value="NM_001348605.1"/>
</dbReference>
<dbReference type="SMR" id="Q10034"/>
<dbReference type="FunCoup" id="Q10034">
    <property type="interactions" value="226"/>
</dbReference>
<dbReference type="STRING" id="6239.F15G9.2.1"/>
<dbReference type="PaxDb" id="6239-F15G9.2"/>
<dbReference type="EnsemblMetazoa" id="F15G9.2.1">
    <property type="protein sequence ID" value="F15G9.2.1"/>
    <property type="gene ID" value="WBGene00008866"/>
</dbReference>
<dbReference type="GeneID" id="184545"/>
<dbReference type="KEGG" id="cel:CELE_F15G9.2"/>
<dbReference type="UCSC" id="F15G9.2">
    <property type="organism name" value="c. elegans"/>
</dbReference>
<dbReference type="AGR" id="WB:WBGene00008866"/>
<dbReference type="CTD" id="184545"/>
<dbReference type="WormBase" id="F15G9.2">
    <property type="protein sequence ID" value="CE51850"/>
    <property type="gene ID" value="WBGene00008866"/>
</dbReference>
<dbReference type="eggNOG" id="ENOG502TIUR">
    <property type="taxonomic scope" value="Eukaryota"/>
</dbReference>
<dbReference type="HOGENOM" id="CLU_1867010_0_0_1"/>
<dbReference type="InParanoid" id="Q10034"/>
<dbReference type="OMA" id="EVSQCMQ"/>
<dbReference type="OrthoDB" id="5865690at2759"/>
<dbReference type="PRO" id="PR:Q10034"/>
<dbReference type="Proteomes" id="UP000001940">
    <property type="component" value="Chromosome X"/>
</dbReference>
<gene>
    <name type="ORF">F15G9.2</name>
</gene>
<reference key="1">
    <citation type="journal article" date="1998" name="Science">
        <title>Genome sequence of the nematode C. elegans: a platform for investigating biology.</title>
        <authorList>
            <consortium name="The C. elegans sequencing consortium"/>
        </authorList>
    </citation>
    <scope>NUCLEOTIDE SEQUENCE [LARGE SCALE GENOMIC DNA]</scope>
    <source>
        <strain>Bristol N2</strain>
    </source>
</reference>
<keyword id="KW-1185">Reference proteome</keyword>